<gene>
    <name evidence="1" type="primary">upp</name>
    <name type="ordered locus">CGSHiGG_01865</name>
</gene>
<evidence type="ECO:0000255" key="1">
    <source>
        <dbReference type="HAMAP-Rule" id="MF_01218"/>
    </source>
</evidence>
<name>UPP_HAEIG</name>
<sequence>MKLVEVKHPLVKHKLGVMREAEIDTKKFRELATEIGSLLTYEATSDLETEKVTINGWNGPVEIDRIKGKKVTVVPILRAGLGMMDGVLEHVPSARISVVGIYRNEETLEPVPYFQKLASDLEERLSIVVDPMLATGGSMIATLDLLKAKGCKHIKVLVLVAAPEGIKALEAAHPDIELYCASIDSHLNEQGYIIPGLGDAGDKIFGTK</sequence>
<comment type="function">
    <text evidence="1">Catalyzes the conversion of uracil and 5-phospho-alpha-D-ribose 1-diphosphate (PRPP) to UMP and diphosphate.</text>
</comment>
<comment type="catalytic activity">
    <reaction evidence="1">
        <text>UMP + diphosphate = 5-phospho-alpha-D-ribose 1-diphosphate + uracil</text>
        <dbReference type="Rhea" id="RHEA:13017"/>
        <dbReference type="ChEBI" id="CHEBI:17568"/>
        <dbReference type="ChEBI" id="CHEBI:33019"/>
        <dbReference type="ChEBI" id="CHEBI:57865"/>
        <dbReference type="ChEBI" id="CHEBI:58017"/>
        <dbReference type="EC" id="2.4.2.9"/>
    </reaction>
</comment>
<comment type="cofactor">
    <cofactor evidence="1">
        <name>Mg(2+)</name>
        <dbReference type="ChEBI" id="CHEBI:18420"/>
    </cofactor>
    <text evidence="1">Binds 1 Mg(2+) ion per subunit. The magnesium is bound as Mg-PRPP.</text>
</comment>
<comment type="activity regulation">
    <text evidence="1">Allosterically activated by GTP.</text>
</comment>
<comment type="pathway">
    <text evidence="1">Pyrimidine metabolism; UMP biosynthesis via salvage pathway; UMP from uracil: step 1/1.</text>
</comment>
<comment type="similarity">
    <text evidence="1">Belongs to the UPRTase family.</text>
</comment>
<dbReference type="EC" id="2.4.2.9" evidence="1"/>
<dbReference type="EMBL" id="CP000672">
    <property type="protein sequence ID" value="ABQ99431.1"/>
    <property type="molecule type" value="Genomic_DNA"/>
</dbReference>
<dbReference type="SMR" id="A5UF76"/>
<dbReference type="KEGG" id="hiq:CGSHiGG_01865"/>
<dbReference type="HOGENOM" id="CLU_067096_2_2_6"/>
<dbReference type="UniPathway" id="UPA00574">
    <property type="reaction ID" value="UER00636"/>
</dbReference>
<dbReference type="Proteomes" id="UP000001990">
    <property type="component" value="Chromosome"/>
</dbReference>
<dbReference type="GO" id="GO:0005525">
    <property type="term" value="F:GTP binding"/>
    <property type="evidence" value="ECO:0007669"/>
    <property type="project" value="UniProtKB-KW"/>
</dbReference>
<dbReference type="GO" id="GO:0000287">
    <property type="term" value="F:magnesium ion binding"/>
    <property type="evidence" value="ECO:0007669"/>
    <property type="project" value="UniProtKB-UniRule"/>
</dbReference>
<dbReference type="GO" id="GO:0004845">
    <property type="term" value="F:uracil phosphoribosyltransferase activity"/>
    <property type="evidence" value="ECO:0007669"/>
    <property type="project" value="UniProtKB-UniRule"/>
</dbReference>
<dbReference type="GO" id="GO:0044206">
    <property type="term" value="P:UMP salvage"/>
    <property type="evidence" value="ECO:0007669"/>
    <property type="project" value="UniProtKB-UniRule"/>
</dbReference>
<dbReference type="GO" id="GO:0006223">
    <property type="term" value="P:uracil salvage"/>
    <property type="evidence" value="ECO:0007669"/>
    <property type="project" value="InterPro"/>
</dbReference>
<dbReference type="CDD" id="cd06223">
    <property type="entry name" value="PRTases_typeI"/>
    <property type="match status" value="1"/>
</dbReference>
<dbReference type="FunFam" id="3.40.50.2020:FF:000003">
    <property type="entry name" value="Uracil phosphoribosyltransferase"/>
    <property type="match status" value="1"/>
</dbReference>
<dbReference type="Gene3D" id="3.40.50.2020">
    <property type="match status" value="1"/>
</dbReference>
<dbReference type="HAMAP" id="MF_01218_B">
    <property type="entry name" value="Upp_B"/>
    <property type="match status" value="1"/>
</dbReference>
<dbReference type="InterPro" id="IPR000836">
    <property type="entry name" value="PRibTrfase_dom"/>
</dbReference>
<dbReference type="InterPro" id="IPR029057">
    <property type="entry name" value="PRTase-like"/>
</dbReference>
<dbReference type="InterPro" id="IPR034332">
    <property type="entry name" value="Upp_B"/>
</dbReference>
<dbReference type="InterPro" id="IPR050054">
    <property type="entry name" value="UPRTase/APRTase"/>
</dbReference>
<dbReference type="InterPro" id="IPR005765">
    <property type="entry name" value="Ura_phspho_trans"/>
</dbReference>
<dbReference type="NCBIfam" id="NF001097">
    <property type="entry name" value="PRK00129.1"/>
    <property type="match status" value="1"/>
</dbReference>
<dbReference type="NCBIfam" id="TIGR01091">
    <property type="entry name" value="upp"/>
    <property type="match status" value="1"/>
</dbReference>
<dbReference type="PANTHER" id="PTHR32315">
    <property type="entry name" value="ADENINE PHOSPHORIBOSYLTRANSFERASE"/>
    <property type="match status" value="1"/>
</dbReference>
<dbReference type="PANTHER" id="PTHR32315:SF4">
    <property type="entry name" value="URACIL PHOSPHORIBOSYLTRANSFERASE, CHLOROPLASTIC"/>
    <property type="match status" value="1"/>
</dbReference>
<dbReference type="Pfam" id="PF14681">
    <property type="entry name" value="UPRTase"/>
    <property type="match status" value="1"/>
</dbReference>
<dbReference type="SUPFAM" id="SSF53271">
    <property type="entry name" value="PRTase-like"/>
    <property type="match status" value="1"/>
</dbReference>
<organism>
    <name type="scientific">Haemophilus influenzae (strain PittGG)</name>
    <dbReference type="NCBI Taxonomy" id="374931"/>
    <lineage>
        <taxon>Bacteria</taxon>
        <taxon>Pseudomonadati</taxon>
        <taxon>Pseudomonadota</taxon>
        <taxon>Gammaproteobacteria</taxon>
        <taxon>Pasteurellales</taxon>
        <taxon>Pasteurellaceae</taxon>
        <taxon>Haemophilus</taxon>
    </lineage>
</organism>
<protein>
    <recommendedName>
        <fullName evidence="1">Uracil phosphoribosyltransferase</fullName>
        <ecNumber evidence="1">2.4.2.9</ecNumber>
    </recommendedName>
    <alternativeName>
        <fullName evidence="1">UMP pyrophosphorylase</fullName>
    </alternativeName>
    <alternativeName>
        <fullName evidence="1">UPRTase</fullName>
    </alternativeName>
</protein>
<feature type="chain" id="PRO_1000053723" description="Uracil phosphoribosyltransferase">
    <location>
        <begin position="1"/>
        <end position="208"/>
    </location>
</feature>
<feature type="binding site" evidence="1">
    <location>
        <position position="78"/>
    </location>
    <ligand>
        <name>5-phospho-alpha-D-ribose 1-diphosphate</name>
        <dbReference type="ChEBI" id="CHEBI:58017"/>
    </ligand>
</feature>
<feature type="binding site" evidence="1">
    <location>
        <position position="103"/>
    </location>
    <ligand>
        <name>5-phospho-alpha-D-ribose 1-diphosphate</name>
        <dbReference type="ChEBI" id="CHEBI:58017"/>
    </ligand>
</feature>
<feature type="binding site" evidence="1">
    <location>
        <begin position="130"/>
        <end position="138"/>
    </location>
    <ligand>
        <name>5-phospho-alpha-D-ribose 1-diphosphate</name>
        <dbReference type="ChEBI" id="CHEBI:58017"/>
    </ligand>
</feature>
<feature type="binding site" evidence="1">
    <location>
        <position position="193"/>
    </location>
    <ligand>
        <name>uracil</name>
        <dbReference type="ChEBI" id="CHEBI:17568"/>
    </ligand>
</feature>
<feature type="binding site" evidence="1">
    <location>
        <begin position="198"/>
        <end position="200"/>
    </location>
    <ligand>
        <name>uracil</name>
        <dbReference type="ChEBI" id="CHEBI:17568"/>
    </ligand>
</feature>
<feature type="binding site" evidence="1">
    <location>
        <position position="199"/>
    </location>
    <ligand>
        <name>5-phospho-alpha-D-ribose 1-diphosphate</name>
        <dbReference type="ChEBI" id="CHEBI:58017"/>
    </ligand>
</feature>
<reference key="1">
    <citation type="journal article" date="2007" name="Genome Biol.">
        <title>Characterization and modeling of the Haemophilus influenzae core and supragenomes based on the complete genomic sequences of Rd and 12 clinical nontypeable strains.</title>
        <authorList>
            <person name="Hogg J.S."/>
            <person name="Hu F.Z."/>
            <person name="Janto B."/>
            <person name="Boissy R."/>
            <person name="Hayes J."/>
            <person name="Keefe R."/>
            <person name="Post J.C."/>
            <person name="Ehrlich G.D."/>
        </authorList>
    </citation>
    <scope>NUCLEOTIDE SEQUENCE [LARGE SCALE GENOMIC DNA]</scope>
    <source>
        <strain>PittGG</strain>
    </source>
</reference>
<keyword id="KW-0021">Allosteric enzyme</keyword>
<keyword id="KW-0328">Glycosyltransferase</keyword>
<keyword id="KW-0342">GTP-binding</keyword>
<keyword id="KW-0460">Magnesium</keyword>
<keyword id="KW-0547">Nucleotide-binding</keyword>
<keyword id="KW-0808">Transferase</keyword>
<proteinExistence type="inferred from homology"/>
<accession>A5UF76</accession>